<sequence length="461" mass="50012">MEKYVVVLAAGKGTRMKTKLYKVLHQVCGKAMVEHVVDAARAVKPSKIVTIVGHGAEDVEKVLAGKSEFVMQEEQLGTGHAVMQAEGQLAALEGATLVVTGDTPLFTSETFEKLFAYHEEEGNAATVLTAEAPDPFGYGRIIRDDQGNVLRIVEQKDGKPEELKVKEINTGVFCFDNQDLWVALKQVGNDNSQGEYYLTDVLEILRKAGKKVGAYKMPDFSESLGVNDRIALAEATRIMQRRINEGHMRDGVTFIDPATAYIDADVEIGNDTVIEGGVTIKGHTVIGSDCLITSGSRIVDSQIGNGVTVTSSTIEESIMEDNTDIGPNSHLRPKALIKRGAHLGNFVEVKKAEIGENTKVGHLTYVGDATLGKDINVGCGVIFSNFDGVKKFHTTVGDKSFIGAGSTLVSPINVADHAFIAADSTITKDVGKYEMAIARGRQVNKKDYWHKLPLSEDEEWK</sequence>
<keyword id="KW-0012">Acyltransferase</keyword>
<keyword id="KW-0133">Cell shape</keyword>
<keyword id="KW-0961">Cell wall biogenesis/degradation</keyword>
<keyword id="KW-0963">Cytoplasm</keyword>
<keyword id="KW-0460">Magnesium</keyword>
<keyword id="KW-0479">Metal-binding</keyword>
<keyword id="KW-0511">Multifunctional enzyme</keyword>
<keyword id="KW-0548">Nucleotidyltransferase</keyword>
<keyword id="KW-0573">Peptidoglycan synthesis</keyword>
<keyword id="KW-0677">Repeat</keyword>
<keyword id="KW-0808">Transferase</keyword>
<name>GLMU_LACDB</name>
<organism>
    <name type="scientific">Lactobacillus delbrueckii subsp. bulgaricus (strain ATCC BAA-365 / Lb-18)</name>
    <dbReference type="NCBI Taxonomy" id="321956"/>
    <lineage>
        <taxon>Bacteria</taxon>
        <taxon>Bacillati</taxon>
        <taxon>Bacillota</taxon>
        <taxon>Bacilli</taxon>
        <taxon>Lactobacillales</taxon>
        <taxon>Lactobacillaceae</taxon>
        <taxon>Lactobacillus</taxon>
    </lineage>
</organism>
<protein>
    <recommendedName>
        <fullName evidence="1">Bifunctional protein GlmU</fullName>
    </recommendedName>
    <domain>
        <recommendedName>
            <fullName evidence="1">UDP-N-acetylglucosamine pyrophosphorylase</fullName>
            <ecNumber evidence="1">2.7.7.23</ecNumber>
        </recommendedName>
        <alternativeName>
            <fullName evidence="1">N-acetylglucosamine-1-phosphate uridyltransferase</fullName>
        </alternativeName>
    </domain>
    <domain>
        <recommendedName>
            <fullName evidence="1">Glucosamine-1-phosphate N-acetyltransferase</fullName>
            <ecNumber evidence="1">2.3.1.157</ecNumber>
        </recommendedName>
    </domain>
</protein>
<gene>
    <name evidence="1" type="primary">glmU</name>
    <name type="ordered locus">LBUL_0303</name>
</gene>
<evidence type="ECO:0000255" key="1">
    <source>
        <dbReference type="HAMAP-Rule" id="MF_01631"/>
    </source>
</evidence>
<proteinExistence type="inferred from homology"/>
<accession>Q04C57</accession>
<reference key="1">
    <citation type="journal article" date="2006" name="Proc. Natl. Acad. Sci. U.S.A.">
        <title>Comparative genomics of the lactic acid bacteria.</title>
        <authorList>
            <person name="Makarova K.S."/>
            <person name="Slesarev A."/>
            <person name="Wolf Y.I."/>
            <person name="Sorokin A."/>
            <person name="Mirkin B."/>
            <person name="Koonin E.V."/>
            <person name="Pavlov A."/>
            <person name="Pavlova N."/>
            <person name="Karamychev V."/>
            <person name="Polouchine N."/>
            <person name="Shakhova V."/>
            <person name="Grigoriev I."/>
            <person name="Lou Y."/>
            <person name="Rohksar D."/>
            <person name="Lucas S."/>
            <person name="Huang K."/>
            <person name="Goodstein D.M."/>
            <person name="Hawkins T."/>
            <person name="Plengvidhya V."/>
            <person name="Welker D."/>
            <person name="Hughes J."/>
            <person name="Goh Y."/>
            <person name="Benson A."/>
            <person name="Baldwin K."/>
            <person name="Lee J.-H."/>
            <person name="Diaz-Muniz I."/>
            <person name="Dosti B."/>
            <person name="Smeianov V."/>
            <person name="Wechter W."/>
            <person name="Barabote R."/>
            <person name="Lorca G."/>
            <person name="Altermann E."/>
            <person name="Barrangou R."/>
            <person name="Ganesan B."/>
            <person name="Xie Y."/>
            <person name="Rawsthorne H."/>
            <person name="Tamir D."/>
            <person name="Parker C."/>
            <person name="Breidt F."/>
            <person name="Broadbent J.R."/>
            <person name="Hutkins R."/>
            <person name="O'Sullivan D."/>
            <person name="Steele J."/>
            <person name="Unlu G."/>
            <person name="Saier M.H. Jr."/>
            <person name="Klaenhammer T."/>
            <person name="Richardson P."/>
            <person name="Kozyavkin S."/>
            <person name="Weimer B.C."/>
            <person name="Mills D.A."/>
        </authorList>
    </citation>
    <scope>NUCLEOTIDE SEQUENCE [LARGE SCALE GENOMIC DNA]</scope>
    <source>
        <strain>ATCC BAA-365 / Lb-18</strain>
    </source>
</reference>
<dbReference type="EC" id="2.7.7.23" evidence="1"/>
<dbReference type="EC" id="2.3.1.157" evidence="1"/>
<dbReference type="EMBL" id="CP000412">
    <property type="protein sequence ID" value="ABJ57965.1"/>
    <property type="molecule type" value="Genomic_DNA"/>
</dbReference>
<dbReference type="RefSeq" id="WP_011678009.1">
    <property type="nucleotide sequence ID" value="NC_008529.1"/>
</dbReference>
<dbReference type="SMR" id="Q04C57"/>
<dbReference type="KEGG" id="lbu:LBUL_0303"/>
<dbReference type="HOGENOM" id="CLU_029499_15_2_9"/>
<dbReference type="BioCyc" id="LDEL321956:LBUL_RS01415-MONOMER"/>
<dbReference type="UniPathway" id="UPA00113">
    <property type="reaction ID" value="UER00532"/>
</dbReference>
<dbReference type="UniPathway" id="UPA00113">
    <property type="reaction ID" value="UER00533"/>
</dbReference>
<dbReference type="UniPathway" id="UPA00973"/>
<dbReference type="GO" id="GO:0005737">
    <property type="term" value="C:cytoplasm"/>
    <property type="evidence" value="ECO:0007669"/>
    <property type="project" value="UniProtKB-SubCell"/>
</dbReference>
<dbReference type="GO" id="GO:0016020">
    <property type="term" value="C:membrane"/>
    <property type="evidence" value="ECO:0007669"/>
    <property type="project" value="GOC"/>
</dbReference>
<dbReference type="GO" id="GO:0019134">
    <property type="term" value="F:glucosamine-1-phosphate N-acetyltransferase activity"/>
    <property type="evidence" value="ECO:0007669"/>
    <property type="project" value="UniProtKB-UniRule"/>
</dbReference>
<dbReference type="GO" id="GO:0000287">
    <property type="term" value="F:magnesium ion binding"/>
    <property type="evidence" value="ECO:0007669"/>
    <property type="project" value="UniProtKB-UniRule"/>
</dbReference>
<dbReference type="GO" id="GO:0003977">
    <property type="term" value="F:UDP-N-acetylglucosamine diphosphorylase activity"/>
    <property type="evidence" value="ECO:0007669"/>
    <property type="project" value="UniProtKB-UniRule"/>
</dbReference>
<dbReference type="GO" id="GO:0000902">
    <property type="term" value="P:cell morphogenesis"/>
    <property type="evidence" value="ECO:0007669"/>
    <property type="project" value="UniProtKB-UniRule"/>
</dbReference>
<dbReference type="GO" id="GO:0071555">
    <property type="term" value="P:cell wall organization"/>
    <property type="evidence" value="ECO:0007669"/>
    <property type="project" value="UniProtKB-KW"/>
</dbReference>
<dbReference type="GO" id="GO:0009245">
    <property type="term" value="P:lipid A biosynthetic process"/>
    <property type="evidence" value="ECO:0007669"/>
    <property type="project" value="UniProtKB-UniRule"/>
</dbReference>
<dbReference type="GO" id="GO:0009252">
    <property type="term" value="P:peptidoglycan biosynthetic process"/>
    <property type="evidence" value="ECO:0007669"/>
    <property type="project" value="UniProtKB-UniRule"/>
</dbReference>
<dbReference type="GO" id="GO:0008360">
    <property type="term" value="P:regulation of cell shape"/>
    <property type="evidence" value="ECO:0007669"/>
    <property type="project" value="UniProtKB-KW"/>
</dbReference>
<dbReference type="GO" id="GO:0006048">
    <property type="term" value="P:UDP-N-acetylglucosamine biosynthetic process"/>
    <property type="evidence" value="ECO:0007669"/>
    <property type="project" value="UniProtKB-UniPathway"/>
</dbReference>
<dbReference type="CDD" id="cd02540">
    <property type="entry name" value="GT2_GlmU_N_bac"/>
    <property type="match status" value="1"/>
</dbReference>
<dbReference type="CDD" id="cd03353">
    <property type="entry name" value="LbH_GlmU_C"/>
    <property type="match status" value="1"/>
</dbReference>
<dbReference type="Gene3D" id="2.160.10.10">
    <property type="entry name" value="Hexapeptide repeat proteins"/>
    <property type="match status" value="1"/>
</dbReference>
<dbReference type="Gene3D" id="3.90.550.10">
    <property type="entry name" value="Spore Coat Polysaccharide Biosynthesis Protein SpsA, Chain A"/>
    <property type="match status" value="1"/>
</dbReference>
<dbReference type="HAMAP" id="MF_01631">
    <property type="entry name" value="GlmU"/>
    <property type="match status" value="1"/>
</dbReference>
<dbReference type="InterPro" id="IPR005882">
    <property type="entry name" value="Bifunctional_GlmU"/>
</dbReference>
<dbReference type="InterPro" id="IPR050065">
    <property type="entry name" value="GlmU-like"/>
</dbReference>
<dbReference type="InterPro" id="IPR038009">
    <property type="entry name" value="GlmU_C_LbH"/>
</dbReference>
<dbReference type="InterPro" id="IPR018357">
    <property type="entry name" value="Hexapep_transf_CS"/>
</dbReference>
<dbReference type="InterPro" id="IPR025877">
    <property type="entry name" value="MobA-like_NTP_Trfase"/>
</dbReference>
<dbReference type="InterPro" id="IPR029044">
    <property type="entry name" value="Nucleotide-diphossugar_trans"/>
</dbReference>
<dbReference type="InterPro" id="IPR011004">
    <property type="entry name" value="Trimer_LpxA-like_sf"/>
</dbReference>
<dbReference type="NCBIfam" id="TIGR01173">
    <property type="entry name" value="glmU"/>
    <property type="match status" value="1"/>
</dbReference>
<dbReference type="NCBIfam" id="NF010934">
    <property type="entry name" value="PRK14354.1"/>
    <property type="match status" value="1"/>
</dbReference>
<dbReference type="PANTHER" id="PTHR43584:SF3">
    <property type="entry name" value="BIFUNCTIONAL PROTEIN GLMU"/>
    <property type="match status" value="1"/>
</dbReference>
<dbReference type="PANTHER" id="PTHR43584">
    <property type="entry name" value="NUCLEOTIDYL TRANSFERASE"/>
    <property type="match status" value="1"/>
</dbReference>
<dbReference type="Pfam" id="PF12804">
    <property type="entry name" value="NTP_transf_3"/>
    <property type="match status" value="1"/>
</dbReference>
<dbReference type="SUPFAM" id="SSF53448">
    <property type="entry name" value="Nucleotide-diphospho-sugar transferases"/>
    <property type="match status" value="1"/>
</dbReference>
<dbReference type="SUPFAM" id="SSF51161">
    <property type="entry name" value="Trimeric LpxA-like enzymes"/>
    <property type="match status" value="1"/>
</dbReference>
<dbReference type="PROSITE" id="PS00101">
    <property type="entry name" value="HEXAPEP_TRANSFERASES"/>
    <property type="match status" value="1"/>
</dbReference>
<comment type="function">
    <text evidence="1">Catalyzes the last two sequential reactions in the de novo biosynthetic pathway for UDP-N-acetylglucosamine (UDP-GlcNAc). The C-terminal domain catalyzes the transfer of acetyl group from acetyl coenzyme A to glucosamine-1-phosphate (GlcN-1-P) to produce N-acetylglucosamine-1-phosphate (GlcNAc-1-P), which is converted into UDP-GlcNAc by the transfer of uridine 5-monophosphate (from uridine 5-triphosphate), a reaction catalyzed by the N-terminal domain.</text>
</comment>
<comment type="catalytic activity">
    <reaction evidence="1">
        <text>alpha-D-glucosamine 1-phosphate + acetyl-CoA = N-acetyl-alpha-D-glucosamine 1-phosphate + CoA + H(+)</text>
        <dbReference type="Rhea" id="RHEA:13725"/>
        <dbReference type="ChEBI" id="CHEBI:15378"/>
        <dbReference type="ChEBI" id="CHEBI:57287"/>
        <dbReference type="ChEBI" id="CHEBI:57288"/>
        <dbReference type="ChEBI" id="CHEBI:57776"/>
        <dbReference type="ChEBI" id="CHEBI:58516"/>
        <dbReference type="EC" id="2.3.1.157"/>
    </reaction>
</comment>
<comment type="catalytic activity">
    <reaction evidence="1">
        <text>N-acetyl-alpha-D-glucosamine 1-phosphate + UTP + H(+) = UDP-N-acetyl-alpha-D-glucosamine + diphosphate</text>
        <dbReference type="Rhea" id="RHEA:13509"/>
        <dbReference type="ChEBI" id="CHEBI:15378"/>
        <dbReference type="ChEBI" id="CHEBI:33019"/>
        <dbReference type="ChEBI" id="CHEBI:46398"/>
        <dbReference type="ChEBI" id="CHEBI:57705"/>
        <dbReference type="ChEBI" id="CHEBI:57776"/>
        <dbReference type="EC" id="2.7.7.23"/>
    </reaction>
</comment>
<comment type="cofactor">
    <cofactor evidence="1">
        <name>Mg(2+)</name>
        <dbReference type="ChEBI" id="CHEBI:18420"/>
    </cofactor>
    <text evidence="1">Binds 1 Mg(2+) ion per subunit.</text>
</comment>
<comment type="pathway">
    <text evidence="1">Nucleotide-sugar biosynthesis; UDP-N-acetyl-alpha-D-glucosamine biosynthesis; N-acetyl-alpha-D-glucosamine 1-phosphate from alpha-D-glucosamine 6-phosphate (route II): step 2/2.</text>
</comment>
<comment type="pathway">
    <text evidence="1">Nucleotide-sugar biosynthesis; UDP-N-acetyl-alpha-D-glucosamine biosynthesis; UDP-N-acetyl-alpha-D-glucosamine from N-acetyl-alpha-D-glucosamine 1-phosphate: step 1/1.</text>
</comment>
<comment type="pathway">
    <text evidence="1">Bacterial outer membrane biogenesis; LPS lipid A biosynthesis.</text>
</comment>
<comment type="subunit">
    <text evidence="1">Homotrimer.</text>
</comment>
<comment type="subcellular location">
    <subcellularLocation>
        <location evidence="1">Cytoplasm</location>
    </subcellularLocation>
</comment>
<comment type="similarity">
    <text evidence="1">In the N-terminal section; belongs to the N-acetylglucosamine-1-phosphate uridyltransferase family.</text>
</comment>
<comment type="similarity">
    <text evidence="1">In the C-terminal section; belongs to the transferase hexapeptide repeat family.</text>
</comment>
<feature type="chain" id="PRO_1000056167" description="Bifunctional protein GlmU">
    <location>
        <begin position="1"/>
        <end position="461"/>
    </location>
</feature>
<feature type="region of interest" description="Pyrophosphorylase" evidence="1">
    <location>
        <begin position="1"/>
        <end position="229"/>
    </location>
</feature>
<feature type="region of interest" description="Linker" evidence="1">
    <location>
        <begin position="230"/>
        <end position="250"/>
    </location>
</feature>
<feature type="region of interest" description="N-acetyltransferase" evidence="1">
    <location>
        <begin position="251"/>
        <end position="461"/>
    </location>
</feature>
<feature type="active site" description="Proton acceptor" evidence="1">
    <location>
        <position position="362"/>
    </location>
</feature>
<feature type="binding site" evidence="1">
    <location>
        <begin position="8"/>
        <end position="11"/>
    </location>
    <ligand>
        <name>UDP-N-acetyl-alpha-D-glucosamine</name>
        <dbReference type="ChEBI" id="CHEBI:57705"/>
    </ligand>
</feature>
<feature type="binding site" evidence="1">
    <location>
        <position position="22"/>
    </location>
    <ligand>
        <name>UDP-N-acetyl-alpha-D-glucosamine</name>
        <dbReference type="ChEBI" id="CHEBI:57705"/>
    </ligand>
</feature>
<feature type="binding site" evidence="1">
    <location>
        <position position="72"/>
    </location>
    <ligand>
        <name>UDP-N-acetyl-alpha-D-glucosamine</name>
        <dbReference type="ChEBI" id="CHEBI:57705"/>
    </ligand>
</feature>
<feature type="binding site" evidence="1">
    <location>
        <begin position="77"/>
        <end position="78"/>
    </location>
    <ligand>
        <name>UDP-N-acetyl-alpha-D-glucosamine</name>
        <dbReference type="ChEBI" id="CHEBI:57705"/>
    </ligand>
</feature>
<feature type="binding site" evidence="1">
    <location>
        <position position="102"/>
    </location>
    <ligand>
        <name>Mg(2+)</name>
        <dbReference type="ChEBI" id="CHEBI:18420"/>
    </ligand>
</feature>
<feature type="binding site" evidence="1">
    <location>
        <position position="139"/>
    </location>
    <ligand>
        <name>UDP-N-acetyl-alpha-D-glucosamine</name>
        <dbReference type="ChEBI" id="CHEBI:57705"/>
    </ligand>
</feature>
<feature type="binding site" evidence="1">
    <location>
        <position position="154"/>
    </location>
    <ligand>
        <name>UDP-N-acetyl-alpha-D-glucosamine</name>
        <dbReference type="ChEBI" id="CHEBI:57705"/>
    </ligand>
</feature>
<feature type="binding site" evidence="1">
    <location>
        <position position="169"/>
    </location>
    <ligand>
        <name>UDP-N-acetyl-alpha-D-glucosamine</name>
        <dbReference type="ChEBI" id="CHEBI:57705"/>
    </ligand>
</feature>
<feature type="binding site" evidence="1">
    <location>
        <position position="227"/>
    </location>
    <ligand>
        <name>Mg(2+)</name>
        <dbReference type="ChEBI" id="CHEBI:18420"/>
    </ligand>
</feature>
<feature type="binding site" evidence="1">
    <location>
        <position position="227"/>
    </location>
    <ligand>
        <name>UDP-N-acetyl-alpha-D-glucosamine</name>
        <dbReference type="ChEBI" id="CHEBI:57705"/>
    </ligand>
</feature>
<feature type="binding site" evidence="1">
    <location>
        <position position="332"/>
    </location>
    <ligand>
        <name>UDP-N-acetyl-alpha-D-glucosamine</name>
        <dbReference type="ChEBI" id="CHEBI:57705"/>
    </ligand>
</feature>
<feature type="binding site" evidence="1">
    <location>
        <position position="350"/>
    </location>
    <ligand>
        <name>UDP-N-acetyl-alpha-D-glucosamine</name>
        <dbReference type="ChEBI" id="CHEBI:57705"/>
    </ligand>
</feature>
<feature type="binding site" evidence="1">
    <location>
        <position position="365"/>
    </location>
    <ligand>
        <name>UDP-N-acetyl-alpha-D-glucosamine</name>
        <dbReference type="ChEBI" id="CHEBI:57705"/>
    </ligand>
</feature>
<feature type="binding site" evidence="1">
    <location>
        <position position="376"/>
    </location>
    <ligand>
        <name>UDP-N-acetyl-alpha-D-glucosamine</name>
        <dbReference type="ChEBI" id="CHEBI:57705"/>
    </ligand>
</feature>
<feature type="binding site" evidence="1">
    <location>
        <position position="422"/>
    </location>
    <ligand>
        <name>acetyl-CoA</name>
        <dbReference type="ChEBI" id="CHEBI:57288"/>
    </ligand>
</feature>
<feature type="binding site" evidence="1">
    <location>
        <position position="439"/>
    </location>
    <ligand>
        <name>acetyl-CoA</name>
        <dbReference type="ChEBI" id="CHEBI:57288"/>
    </ligand>
</feature>